<reference key="1">
    <citation type="journal article" date="1998" name="Science">
        <title>Genome sequence of the nematode C. elegans: a platform for investigating biology.</title>
        <authorList>
            <consortium name="The C. elegans sequencing consortium"/>
        </authorList>
    </citation>
    <scope>NUCLEOTIDE SEQUENCE [LARGE SCALE GENOMIC DNA]</scope>
    <source>
        <strain>Bristol N2</strain>
    </source>
</reference>
<reference key="2">
    <citation type="journal article" date="2011" name="PLoS Genet.">
        <title>Macoilin, a conserved nervous system-specific ER membrane protein that regulates neuronal excitability.</title>
        <authorList>
            <person name="Arellano-Carbajal F."/>
            <person name="Briseno-Roa L."/>
            <person name="Couto A."/>
            <person name="Cheung B.H."/>
            <person name="Labouesse M."/>
            <person name="de Bono M."/>
        </authorList>
    </citation>
    <scope>SUBCELLULAR LOCATION</scope>
    <scope>TISSUE SPECIFICITY</scope>
    <scope>FUNCTION</scope>
</reference>
<reference key="3">
    <citation type="journal article" date="2011" name="PLoS Genet.">
        <title>Novel and conserved protein macoilin is required for diverse neuronal functions in Caenorhabditis elegans.</title>
        <authorList>
            <person name="Miyara A."/>
            <person name="Ohta A."/>
            <person name="Okochi Y."/>
            <person name="Tsukada Y."/>
            <person name="Kuhara A."/>
            <person name="Mori I."/>
        </authorList>
    </citation>
    <scope>SUBCELLULAR LOCATION</scope>
    <scope>TISSUE SPECIFICITY</scope>
    <scope>FUNCTION</scope>
</reference>
<reference key="4">
    <citation type="journal article" date="2016" name="G3 (Bethesda)">
        <title>A Forward Genetic Screen for Molecules Involved in Pheromone-Induced Dauer Formation in Caenorhabditis elegans.</title>
        <authorList>
            <person name="Neal S.J."/>
            <person name="Park J."/>
            <person name="DiTirro D."/>
            <person name="Yoon J."/>
            <person name="Shibuya M."/>
            <person name="Choi W."/>
            <person name="Schroeder F.C."/>
            <person name="Butcher R.A."/>
            <person name="Kim K."/>
            <person name="Sengupta P."/>
        </authorList>
    </citation>
    <scope>FUNCTION</scope>
</reference>
<reference key="5">
    <citation type="journal article" date="2017" name="J. Neurosci.">
        <title>Multiple Signaling Pathways Coordinately Regulate Forgetting of Olfactory Adaptation through Control of Sensory Responses in Caenorhabditis elegans.</title>
        <authorList>
            <person name="Kitazono T."/>
            <person name="Hara-Kuge S."/>
            <person name="Matsuda O."/>
            <person name="Inoue A."/>
            <person name="Fujiwara M."/>
            <person name="Ishihara T."/>
        </authorList>
    </citation>
    <scope>FUNCTION</scope>
</reference>
<reference key="6">
    <citation type="journal article" date="2020" name="Nature">
        <title>C. elegans interprets bacterial non-coding RNAs to learn pathogenic avoidance.</title>
        <authorList>
            <person name="Kaletsky R."/>
            <person name="Moore R.S."/>
            <person name="Vrla G.D."/>
            <person name="Parsons L.R."/>
            <person name="Gitai Z."/>
            <person name="Murphy C.T."/>
        </authorList>
    </citation>
    <scope>FUNCTION</scope>
    <scope>DISRUPTION PHENOTYPE</scope>
</reference>
<feature type="chain" id="PRO_0000443037" description="Macoilin">
    <location>
        <begin position="1"/>
        <end position="897"/>
    </location>
</feature>
<feature type="transmembrane region" description="Helical" evidence="1">
    <location>
        <begin position="113"/>
        <end position="133"/>
    </location>
</feature>
<feature type="transmembrane region" description="Helical" evidence="1">
    <location>
        <begin position="157"/>
        <end position="177"/>
    </location>
</feature>
<feature type="transmembrane region" description="Helical" evidence="1">
    <location>
        <begin position="181"/>
        <end position="201"/>
    </location>
</feature>
<feature type="transmembrane region" description="Helical" evidence="1">
    <location>
        <begin position="204"/>
        <end position="224"/>
    </location>
</feature>
<feature type="transmembrane region" description="Helical" evidence="1">
    <location>
        <begin position="379"/>
        <end position="399"/>
    </location>
</feature>
<feature type="region of interest" description="Disordered" evidence="2">
    <location>
        <begin position="291"/>
        <end position="375"/>
    </location>
</feature>
<feature type="region of interest" description="Disordered" evidence="2">
    <location>
        <begin position="403"/>
        <end position="535"/>
    </location>
</feature>
<feature type="region of interest" description="Disordered" evidence="2">
    <location>
        <begin position="724"/>
        <end position="770"/>
    </location>
</feature>
<feature type="coiled-coil region" evidence="1">
    <location>
        <begin position="503"/>
        <end position="726"/>
    </location>
</feature>
<feature type="compositionally biased region" description="Polar residues" evidence="2">
    <location>
        <begin position="291"/>
        <end position="304"/>
    </location>
</feature>
<feature type="compositionally biased region" description="Polar residues" evidence="2">
    <location>
        <begin position="329"/>
        <end position="338"/>
    </location>
</feature>
<feature type="compositionally biased region" description="Acidic residues" evidence="2">
    <location>
        <begin position="351"/>
        <end position="361"/>
    </location>
</feature>
<feature type="compositionally biased region" description="Polar residues" evidence="2">
    <location>
        <begin position="403"/>
        <end position="413"/>
    </location>
</feature>
<feature type="compositionally biased region" description="Acidic residues" evidence="2">
    <location>
        <begin position="414"/>
        <end position="424"/>
    </location>
</feature>
<feature type="compositionally biased region" description="Polar residues" evidence="2">
    <location>
        <begin position="432"/>
        <end position="451"/>
    </location>
</feature>
<feature type="compositionally biased region" description="Low complexity" evidence="2">
    <location>
        <begin position="452"/>
        <end position="467"/>
    </location>
</feature>
<feature type="compositionally biased region" description="Low complexity" evidence="2">
    <location>
        <begin position="475"/>
        <end position="490"/>
    </location>
</feature>
<feature type="compositionally biased region" description="Basic and acidic residues" evidence="2">
    <location>
        <begin position="510"/>
        <end position="535"/>
    </location>
</feature>
<feature type="compositionally biased region" description="Polar residues" evidence="2">
    <location>
        <begin position="734"/>
        <end position="761"/>
    </location>
</feature>
<proteinExistence type="evidence at transcript level"/>
<name>MACO1_CAEEL</name>
<comment type="function">
    <text evidence="3 4 5 6 7">Plays a role in the regulation of neuronal activity. In AWA and AWC neurons, plays a role in regulating olfactory adaptation by controlling the forgetting sensory responses to odorants such as diacetyl and isoamyl alcohol (PubMed:28924007). May play a role in regulating daf-7 expression in ASI neurons in response to bacterial small RNAs (PubMed:32908307). In ASI neurons, promotes dauer formation in response to pheromones such as the ascarosides ascr#2 and ascr#3 (PubMed:26976437).</text>
</comment>
<comment type="subcellular location">
    <subcellularLocation>
        <location evidence="3 4">Rough endoplasmic reticulum membrane</location>
        <topology evidence="1">Multi-pass membrane protein</topology>
    </subcellularLocation>
    <subcellularLocation>
        <location evidence="3">Nucleus membrane</location>
        <topology evidence="1">Multi-pass membrane protein</topology>
    </subcellularLocation>
    <text evidence="3">Restricted to neuronal cell bodies, absent from dendrites and axons (PubMed:21437263).</text>
</comment>
<comment type="tissue specificity">
    <text evidence="3 4">Strong expression in many neurons, very weak expression is also detected in others tissues.</text>
</comment>
<comment type="disruption phenotype">
    <text evidence="7">RNAi-mediated knockdown results in defective avoidance behavior in response to P.aeruginosa.</text>
</comment>
<gene>
    <name evidence="10" type="primary">maco-1</name>
    <name evidence="10" type="ORF">D2092.5</name>
</gene>
<protein>
    <recommendedName>
        <fullName evidence="8 9">Macoilin</fullName>
    </recommendedName>
</protein>
<sequence>MMQQQKPGKPKKINRIDKIKRLQINRSRRPDINQTVPSPLFYVRIVVTWLGMVSLDAMTGFRFELLWPTWLMIRAAAESIQMRNQHCVTTIANPTAARFSVLFICVTATSDLICYLFIPIRMLIFLATTYVWISLYYHTQGGFLRSLATVYGGERLQSWPIVFITCFIVIFELFLRIRSHPILISFFPNVAEYAGVSPVWPRSLNAFFGAHSIGYPVILITVSMHYYFNEWKLRRKQCDVSNRNEQLFRILVEGLPAEYEGPKDYTSQQCLEDDLYYLDPPVQTLQPMQAIQAASATPPTSSKKNGIHKRNGDVTSSTTTSSRKKKHNGNSGFNSTPPNDKKKGKSIRDVDMDDGDDSDDDYSYRDTSSSTIEDQRRGGGISIIRFIFSSAAWLFSFVFESSTPSENSLSNQQIDDDEDYEDGDGDKKNGRTDSMTSTTKGRANTMPSTTRSQNNNNSQKQQKQSNGKSHHQHSSHQNNHQKSNGNSNGHARGFAAVRDSSHDTNASNETDIRSMSRELESLRSEISSRRSQEEDFKLQVSMHESNETRLSQQLSNMRLKVEQMEIKCSSIERHRESDKHQLEQAERKYADLLGKKAEIEATLSAERKARMEVTSKKYDVAEHQRERERQLESEIDKLRIELKSKDESNMRMESELHGLRNYKEENDIDSLNMELRFVRDKSHQMEESLAGENKLKQSLFKCLGDARDTIKSLERRVQEFQIKNGSSIGGGSSETLMNGRSSTEANNENDTTASDQSSPHQHSAMGSPVPFAKMPLSVNVSNRHGSPFNGKVSPIASIGSVLAAAGGPAPPDYMMAVGANVTATTGPVPQKQPRAGFHGISRYNEFTNIASGGEHRLFDTPASAISASAINGSNPEDDFLMNKGKFGAPSQPAARLA</sequence>
<keyword id="KW-0175">Coiled coil</keyword>
<keyword id="KW-0256">Endoplasmic reticulum</keyword>
<keyword id="KW-0472">Membrane</keyword>
<keyword id="KW-0539">Nucleus</keyword>
<keyword id="KW-1185">Reference proteome</keyword>
<keyword id="KW-0812">Transmembrane</keyword>
<keyword id="KW-1133">Transmembrane helix</keyword>
<evidence type="ECO:0000255" key="1"/>
<evidence type="ECO:0000256" key="2">
    <source>
        <dbReference type="SAM" id="MobiDB-lite"/>
    </source>
</evidence>
<evidence type="ECO:0000269" key="3">
    <source>
    </source>
</evidence>
<evidence type="ECO:0000269" key="4">
    <source>
    </source>
</evidence>
<evidence type="ECO:0000269" key="5">
    <source>
    </source>
</evidence>
<evidence type="ECO:0000269" key="6">
    <source>
    </source>
</evidence>
<evidence type="ECO:0000269" key="7">
    <source>
    </source>
</evidence>
<evidence type="ECO:0000303" key="8">
    <source>
    </source>
</evidence>
<evidence type="ECO:0000303" key="9">
    <source>
    </source>
</evidence>
<evidence type="ECO:0000312" key="10">
    <source>
        <dbReference type="WormBase" id="D2092.5"/>
    </source>
</evidence>
<dbReference type="EMBL" id="BX284601">
    <property type="protein sequence ID" value="CCD68500.1"/>
    <property type="molecule type" value="Genomic_DNA"/>
</dbReference>
<dbReference type="RefSeq" id="NP_491902.4">
    <property type="nucleotide sequence ID" value="NM_059501.4"/>
</dbReference>
<dbReference type="SMR" id="P91193"/>
<dbReference type="FunCoup" id="P91193">
    <property type="interactions" value="2529"/>
</dbReference>
<dbReference type="STRING" id="6239.D2092.5.1"/>
<dbReference type="TCDB" id="8.A.38.1.2">
    <property type="family name" value="the animal macoilin regulator of ion channels (macoilin) family"/>
</dbReference>
<dbReference type="PaxDb" id="6239-D2092.5"/>
<dbReference type="PeptideAtlas" id="P91193"/>
<dbReference type="EnsemblMetazoa" id="D2092.5.1">
    <property type="protein sequence ID" value="D2092.5.1"/>
    <property type="gene ID" value="WBGene00017066"/>
</dbReference>
<dbReference type="GeneID" id="183963"/>
<dbReference type="KEGG" id="cel:CELE_D2092.5"/>
<dbReference type="UCSC" id="D2092.5">
    <property type="organism name" value="c. elegans"/>
</dbReference>
<dbReference type="AGR" id="WB:WBGene00017066"/>
<dbReference type="CTD" id="183963"/>
<dbReference type="WormBase" id="D2092.5">
    <property type="protein sequence ID" value="CE45670"/>
    <property type="gene ID" value="WBGene00017066"/>
    <property type="gene designation" value="maco-1"/>
</dbReference>
<dbReference type="eggNOG" id="KOG1821">
    <property type="taxonomic scope" value="Eukaryota"/>
</dbReference>
<dbReference type="GeneTree" id="ENSGT00390000016613"/>
<dbReference type="HOGENOM" id="CLU_321894_0_0_1"/>
<dbReference type="InParanoid" id="P91193"/>
<dbReference type="OMA" id="SDLCRPF"/>
<dbReference type="OrthoDB" id="10071111at2759"/>
<dbReference type="PhylomeDB" id="P91193"/>
<dbReference type="PRO" id="PR:P91193"/>
<dbReference type="Proteomes" id="UP000001940">
    <property type="component" value="Chromosome I"/>
</dbReference>
<dbReference type="Bgee" id="WBGene00017066">
    <property type="expression patterns" value="Expressed in embryo and 3 other cell types or tissues"/>
</dbReference>
<dbReference type="GO" id="GO:0043025">
    <property type="term" value="C:neuronal cell body"/>
    <property type="evidence" value="ECO:0000314"/>
    <property type="project" value="UniProtKB"/>
</dbReference>
<dbReference type="GO" id="GO:0005635">
    <property type="term" value="C:nuclear envelope"/>
    <property type="evidence" value="ECO:0000314"/>
    <property type="project" value="WormBase"/>
</dbReference>
<dbReference type="GO" id="GO:0031965">
    <property type="term" value="C:nuclear membrane"/>
    <property type="evidence" value="ECO:0000318"/>
    <property type="project" value="GO_Central"/>
</dbReference>
<dbReference type="GO" id="GO:0005791">
    <property type="term" value="C:rough endoplasmic reticulum"/>
    <property type="evidence" value="ECO:0000314"/>
    <property type="project" value="WormBase"/>
</dbReference>
<dbReference type="GO" id="GO:0030867">
    <property type="term" value="C:rough endoplasmic reticulum membrane"/>
    <property type="evidence" value="ECO:0000318"/>
    <property type="project" value="GO_Central"/>
</dbReference>
<dbReference type="GO" id="GO:0008017">
    <property type="term" value="F:microtubule binding"/>
    <property type="evidence" value="ECO:0000318"/>
    <property type="project" value="GO_Central"/>
</dbReference>
<dbReference type="GO" id="GO:0006935">
    <property type="term" value="P:chemotaxis"/>
    <property type="evidence" value="ECO:0000315"/>
    <property type="project" value="WormBase"/>
</dbReference>
<dbReference type="GO" id="GO:0040011">
    <property type="term" value="P:locomotion"/>
    <property type="evidence" value="ECO:0000315"/>
    <property type="project" value="WormBase"/>
</dbReference>
<dbReference type="GO" id="GO:0023041">
    <property type="term" value="P:neuronal signal transduction"/>
    <property type="evidence" value="ECO:0000315"/>
    <property type="project" value="WormBase"/>
</dbReference>
<dbReference type="GO" id="GO:0043052">
    <property type="term" value="P:thermotaxis"/>
    <property type="evidence" value="ECO:0000315"/>
    <property type="project" value="WormBase"/>
</dbReference>
<dbReference type="InterPro" id="IPR019130">
    <property type="entry name" value="Macoilin"/>
</dbReference>
<dbReference type="PANTHER" id="PTHR13289:SF6">
    <property type="entry name" value="MACOILIN"/>
    <property type="match status" value="1"/>
</dbReference>
<dbReference type="PANTHER" id="PTHR13289">
    <property type="entry name" value="PROTEIN PHOSPHATASE 1-BINDING PROTEIN BIFOCAL"/>
    <property type="match status" value="1"/>
</dbReference>
<dbReference type="Pfam" id="PF09726">
    <property type="entry name" value="Macoilin"/>
    <property type="match status" value="2"/>
</dbReference>
<accession>P91193</accession>
<organism>
    <name type="scientific">Caenorhabditis elegans</name>
    <dbReference type="NCBI Taxonomy" id="6239"/>
    <lineage>
        <taxon>Eukaryota</taxon>
        <taxon>Metazoa</taxon>
        <taxon>Ecdysozoa</taxon>
        <taxon>Nematoda</taxon>
        <taxon>Chromadorea</taxon>
        <taxon>Rhabditida</taxon>
        <taxon>Rhabditina</taxon>
        <taxon>Rhabditomorpha</taxon>
        <taxon>Rhabditoidea</taxon>
        <taxon>Rhabditidae</taxon>
        <taxon>Peloderinae</taxon>
        <taxon>Caenorhabditis</taxon>
    </lineage>
</organism>